<dbReference type="EMBL" id="AB179819">
    <property type="protein sequence ID" value="BAD83782.1"/>
    <property type="molecule type" value="mRNA"/>
</dbReference>
<dbReference type="SMR" id="Q5KT10"/>
<dbReference type="OrthoDB" id="9949225at2759"/>
<dbReference type="Proteomes" id="UP000515129">
    <property type="component" value="Unplaced"/>
</dbReference>
<dbReference type="GO" id="GO:0005576">
    <property type="term" value="C:extracellular region"/>
    <property type="evidence" value="ECO:0007669"/>
    <property type="project" value="UniProtKB-SubCell"/>
</dbReference>
<dbReference type="GO" id="GO:0030141">
    <property type="term" value="C:secretory granule"/>
    <property type="evidence" value="ECO:0007669"/>
    <property type="project" value="TreeGrafter"/>
</dbReference>
<dbReference type="GO" id="GO:0008437">
    <property type="term" value="F:thyrotropin-releasing hormone activity"/>
    <property type="evidence" value="ECO:0007669"/>
    <property type="project" value="InterPro"/>
</dbReference>
<dbReference type="GO" id="GO:0042755">
    <property type="term" value="P:eating behavior"/>
    <property type="evidence" value="ECO:0007669"/>
    <property type="project" value="TreeGrafter"/>
</dbReference>
<dbReference type="GO" id="GO:0001692">
    <property type="term" value="P:histamine metabolic process"/>
    <property type="evidence" value="ECO:0007669"/>
    <property type="project" value="TreeGrafter"/>
</dbReference>
<dbReference type="GO" id="GO:0009755">
    <property type="term" value="P:hormone-mediated signaling pathway"/>
    <property type="evidence" value="ECO:0007669"/>
    <property type="project" value="InterPro"/>
</dbReference>
<dbReference type="GO" id="GO:0014050">
    <property type="term" value="P:negative regulation of glutamate secretion"/>
    <property type="evidence" value="ECO:0007669"/>
    <property type="project" value="TreeGrafter"/>
</dbReference>
<dbReference type="GO" id="GO:0014054">
    <property type="term" value="P:positive regulation of gamma-aminobutyric acid secretion"/>
    <property type="evidence" value="ECO:0007669"/>
    <property type="project" value="TreeGrafter"/>
</dbReference>
<dbReference type="GO" id="GO:0032024">
    <property type="term" value="P:positive regulation of insulin secretion"/>
    <property type="evidence" value="ECO:0007669"/>
    <property type="project" value="TreeGrafter"/>
</dbReference>
<dbReference type="InterPro" id="IPR008857">
    <property type="entry name" value="TRH"/>
</dbReference>
<dbReference type="PANTHER" id="PTHR17530">
    <property type="entry name" value="PRO-THYROTROPIN-RELEASING HORMONE"/>
    <property type="match status" value="1"/>
</dbReference>
<dbReference type="PANTHER" id="PTHR17530:SF2">
    <property type="entry name" value="PRO-THYROTROPIN-RELEASING HORMONE"/>
    <property type="match status" value="1"/>
</dbReference>
<dbReference type="Pfam" id="PF05438">
    <property type="entry name" value="TRH"/>
    <property type="match status" value="1"/>
</dbReference>
<dbReference type="PIRSF" id="PIRSF001795">
    <property type="entry name" value="TRH"/>
    <property type="match status" value="1"/>
</dbReference>
<gene>
    <name type="primary">trh</name>
</gene>
<reference key="1">
    <citation type="journal article" date="2005" name="Gen. Comp. Endocrinol.">
        <title>Molecular cloning of prepro-thyrotropin-releasing hormone cDNAs from the common carp Cyprinus carpio and goldfish Carassius auratus.</title>
        <authorList>
            <person name="Aoki Y."/>
            <person name="Takahashi M."/>
            <person name="Masuda T."/>
            <person name="Tsukamoto T."/>
            <person name="Iigo M."/>
            <person name="Yanagisawa T."/>
        </authorList>
    </citation>
    <scope>NUCLEOTIDE SEQUENCE [MRNA]</scope>
</reference>
<sequence length="231" mass="26597">MRAACVIILASLTVFMSPGLQCQPLAGEGDPSLDELFQRAESLLIRSILTQTEDENHGDGEQTEWLEKRQHPGKRQHPGKREDTDYEDEAAALQKRQHPGKREEEEDSARLRRQHPGKRLSLEHMMLEEPTAQSELAKRQHPGRRYLMLLHKRQHPGRRELHEAAGDFSDLAKRQHPGKRLCEDWDVTGCDQASILLELLDNVNKSRAEEKRQHPGKRFALEDELTEQESL</sequence>
<organism>
    <name type="scientific">Carassius auratus</name>
    <name type="common">Goldfish</name>
    <dbReference type="NCBI Taxonomy" id="7957"/>
    <lineage>
        <taxon>Eukaryota</taxon>
        <taxon>Metazoa</taxon>
        <taxon>Chordata</taxon>
        <taxon>Craniata</taxon>
        <taxon>Vertebrata</taxon>
        <taxon>Euteleostomi</taxon>
        <taxon>Actinopterygii</taxon>
        <taxon>Neopterygii</taxon>
        <taxon>Teleostei</taxon>
        <taxon>Ostariophysi</taxon>
        <taxon>Cypriniformes</taxon>
        <taxon>Cyprinidae</taxon>
        <taxon>Cyprininae</taxon>
        <taxon>Carassius</taxon>
    </lineage>
</organism>
<evidence type="ECO:0000250" key="1"/>
<evidence type="ECO:0000255" key="2"/>
<evidence type="ECO:0000256" key="3">
    <source>
        <dbReference type="SAM" id="MobiDB-lite"/>
    </source>
</evidence>
<evidence type="ECO:0000305" key="4"/>
<keyword id="KW-0027">Amidation</keyword>
<keyword id="KW-0165">Cleavage on pair of basic residues</keyword>
<keyword id="KW-0372">Hormone</keyword>
<keyword id="KW-0873">Pyrrolidone carboxylic acid</keyword>
<keyword id="KW-1185">Reference proteome</keyword>
<keyword id="KW-0677">Repeat</keyword>
<keyword id="KW-0964">Secreted</keyword>
<keyword id="KW-0732">Signal</keyword>
<protein>
    <recommendedName>
        <fullName>Pro-thyrotropin-releasing hormone</fullName>
        <shortName>Pro-TRH</shortName>
    </recommendedName>
    <alternativeName>
        <fullName>Prothyroliberin</fullName>
    </alternativeName>
    <component>
        <recommendedName>
            <fullName>Thyrotropin-releasing hormone</fullName>
            <shortName>TRH</shortName>
        </recommendedName>
        <alternativeName>
            <fullName>Protirelin</fullName>
        </alternativeName>
        <alternativeName>
            <fullName>TSH-releasing factor</fullName>
        </alternativeName>
        <alternativeName>
            <fullName>Thyroliberin</fullName>
        </alternativeName>
        <alternativeName>
            <fullName>Thyrotropin-releasing factor</fullName>
            <shortName>TRF</shortName>
        </alternativeName>
    </component>
</protein>
<proteinExistence type="evidence at transcript level"/>
<name>TRH_CARAU</name>
<feature type="signal peptide" evidence="2">
    <location>
        <begin position="1"/>
        <end position="22"/>
    </location>
</feature>
<feature type="chain" id="PRO_0000041904" description="Pro-thyrotropin-releasing hormone">
    <location>
        <begin position="23"/>
        <end position="231"/>
    </location>
</feature>
<feature type="peptide" id="PRO_0000041905" description="Thyrotropin-releasing hormone">
    <location>
        <begin position="70"/>
        <end position="72"/>
    </location>
</feature>
<feature type="peptide" id="PRO_0000041906" description="Thyrotropin-releasing hormone">
    <location>
        <begin position="76"/>
        <end position="78"/>
    </location>
</feature>
<feature type="peptide" id="PRO_0000041907" description="Thyrotropin-releasing hormone">
    <location>
        <begin position="97"/>
        <end position="99"/>
    </location>
</feature>
<feature type="peptide" id="PRO_0000041908" description="Thyrotropin-releasing hormone">
    <location>
        <begin position="114"/>
        <end position="116"/>
    </location>
</feature>
<feature type="peptide" id="PRO_0000041909" description="Thyrotropin-releasing hormone">
    <location>
        <begin position="140"/>
        <end position="142"/>
    </location>
</feature>
<feature type="peptide" id="PRO_0000041910" description="Thyrotropin-releasing hormone">
    <location>
        <begin position="154"/>
        <end position="156"/>
    </location>
</feature>
<feature type="peptide" id="PRO_0000041911" description="Thyrotropin-releasing hormone">
    <location>
        <begin position="175"/>
        <end position="177"/>
    </location>
</feature>
<feature type="peptide" id="PRO_0000041912" description="Thyrotropin-releasing hormone">
    <location>
        <begin position="213"/>
        <end position="215"/>
    </location>
</feature>
<feature type="region of interest" description="Disordered" evidence="3">
    <location>
        <begin position="50"/>
        <end position="139"/>
    </location>
</feature>
<feature type="region of interest" description="Disordered" evidence="3">
    <location>
        <begin position="206"/>
        <end position="231"/>
    </location>
</feature>
<feature type="compositionally biased region" description="Basic and acidic residues" evidence="3">
    <location>
        <begin position="54"/>
        <end position="70"/>
    </location>
</feature>
<feature type="compositionally biased region" description="Acidic residues" evidence="3">
    <location>
        <begin position="222"/>
        <end position="231"/>
    </location>
</feature>
<feature type="modified residue" description="Pyrrolidone carboxylic acid" evidence="1">
    <location>
        <position position="70"/>
    </location>
</feature>
<feature type="modified residue" description="Proline amide" evidence="1">
    <location>
        <position position="72"/>
    </location>
</feature>
<feature type="modified residue" description="Pyrrolidone carboxylic acid" evidence="1">
    <location>
        <position position="76"/>
    </location>
</feature>
<feature type="modified residue" description="Proline amide" evidence="1">
    <location>
        <position position="78"/>
    </location>
</feature>
<feature type="modified residue" description="Pyrrolidone carboxylic acid" evidence="1">
    <location>
        <position position="97"/>
    </location>
</feature>
<feature type="modified residue" description="Proline amide" evidence="1">
    <location>
        <position position="99"/>
    </location>
</feature>
<feature type="modified residue" description="Pyrrolidone carboxylic acid" evidence="1">
    <location>
        <position position="114"/>
    </location>
</feature>
<feature type="modified residue" description="Proline amide" evidence="1">
    <location>
        <position position="116"/>
    </location>
</feature>
<feature type="modified residue" description="Pyrrolidone carboxylic acid" evidence="1">
    <location>
        <position position="140"/>
    </location>
</feature>
<feature type="modified residue" description="Proline amide" evidence="1">
    <location>
        <position position="142"/>
    </location>
</feature>
<feature type="modified residue" description="Pyrrolidone carboxylic acid" evidence="1">
    <location>
        <position position="154"/>
    </location>
</feature>
<feature type="modified residue" description="Proline amide" evidence="1">
    <location>
        <position position="156"/>
    </location>
</feature>
<feature type="modified residue" description="Pyrrolidone carboxylic acid" evidence="1">
    <location>
        <position position="175"/>
    </location>
</feature>
<feature type="modified residue" description="Proline amide" evidence="1">
    <location>
        <position position="177"/>
    </location>
</feature>
<feature type="modified residue" description="Pyrrolidone carboxylic acid" evidence="1">
    <location>
        <position position="213"/>
    </location>
</feature>
<feature type="modified residue" description="Proline amide" evidence="1">
    <location>
        <position position="215"/>
    </location>
</feature>
<comment type="function">
    <text evidence="1">Functions as a regulator of the biosynthesis of TSH in the anterior pituitary gland and as a neurotransmitter/ neuromodulator in the central and peripheral nervous systems.</text>
</comment>
<comment type="subcellular location">
    <subcellularLocation>
        <location>Secreted</location>
    </subcellularLocation>
</comment>
<comment type="similarity">
    <text evidence="4">Belongs to the TRH family.</text>
</comment>
<accession>Q5KT10</accession>